<proteinExistence type="inferred from homology"/>
<organism>
    <name type="scientific">Rhizobium meliloti (strain 1021)</name>
    <name type="common">Ensifer meliloti</name>
    <name type="synonym">Sinorhizobium meliloti</name>
    <dbReference type="NCBI Taxonomy" id="266834"/>
    <lineage>
        <taxon>Bacteria</taxon>
        <taxon>Pseudomonadati</taxon>
        <taxon>Pseudomonadota</taxon>
        <taxon>Alphaproteobacteria</taxon>
        <taxon>Hyphomicrobiales</taxon>
        <taxon>Rhizobiaceae</taxon>
        <taxon>Sinorhizobium/Ensifer group</taxon>
        <taxon>Sinorhizobium</taxon>
    </lineage>
</organism>
<name>BETB1_RHIME</name>
<evidence type="ECO:0000255" key="1">
    <source>
        <dbReference type="HAMAP-Rule" id="MF_00804"/>
    </source>
</evidence>
<evidence type="ECO:0000305" key="2"/>
<dbReference type="EC" id="1.2.1.8" evidence="1"/>
<dbReference type="EMBL" id="U39940">
    <property type="protein sequence ID" value="AAC13368.1"/>
    <property type="molecule type" value="Genomic_DNA"/>
</dbReference>
<dbReference type="EMBL" id="AL591688">
    <property type="protein sequence ID" value="CAC45520.1"/>
    <property type="molecule type" value="Genomic_DNA"/>
</dbReference>
<dbReference type="RefSeq" id="NP_385054.1">
    <property type="nucleotide sequence ID" value="NC_003047.1"/>
</dbReference>
<dbReference type="RefSeq" id="WP_010968941.1">
    <property type="nucleotide sequence ID" value="NC_003047.1"/>
</dbReference>
<dbReference type="SMR" id="P54222"/>
<dbReference type="EnsemblBacteria" id="CAC45520">
    <property type="protein sequence ID" value="CAC45520"/>
    <property type="gene ID" value="SMc00094"/>
</dbReference>
<dbReference type="KEGG" id="sme:SMc00094"/>
<dbReference type="PATRIC" id="fig|266834.11.peg.2347"/>
<dbReference type="eggNOG" id="COG1012">
    <property type="taxonomic scope" value="Bacteria"/>
</dbReference>
<dbReference type="HOGENOM" id="CLU_005391_0_0_5"/>
<dbReference type="OrthoDB" id="9772584at2"/>
<dbReference type="BioCyc" id="MetaCyc:MONOMER-246"/>
<dbReference type="UniPathway" id="UPA00529">
    <property type="reaction ID" value="UER00386"/>
</dbReference>
<dbReference type="Proteomes" id="UP000001976">
    <property type="component" value="Chromosome"/>
</dbReference>
<dbReference type="GO" id="GO:0008802">
    <property type="term" value="F:betaine-aldehyde dehydrogenase (NAD+) activity"/>
    <property type="evidence" value="ECO:0007669"/>
    <property type="project" value="UniProtKB-UniRule"/>
</dbReference>
<dbReference type="GO" id="GO:0046872">
    <property type="term" value="F:metal ion binding"/>
    <property type="evidence" value="ECO:0007669"/>
    <property type="project" value="UniProtKB-KW"/>
</dbReference>
<dbReference type="GO" id="GO:0019285">
    <property type="term" value="P:glycine betaine biosynthetic process from choline"/>
    <property type="evidence" value="ECO:0007669"/>
    <property type="project" value="UniProtKB-UniRule"/>
</dbReference>
<dbReference type="CDD" id="cd07090">
    <property type="entry name" value="ALDH_F9_TMBADH"/>
    <property type="match status" value="1"/>
</dbReference>
<dbReference type="FunFam" id="3.40.605.10:FF:000026">
    <property type="entry name" value="Aldehyde dehydrogenase, putative"/>
    <property type="match status" value="1"/>
</dbReference>
<dbReference type="FunFam" id="3.40.309.10:FF:000012">
    <property type="entry name" value="Betaine aldehyde dehydrogenase"/>
    <property type="match status" value="1"/>
</dbReference>
<dbReference type="FunFam" id="3.40.605.10:FF:000007">
    <property type="entry name" value="NAD/NADP-dependent betaine aldehyde dehydrogenase"/>
    <property type="match status" value="1"/>
</dbReference>
<dbReference type="Gene3D" id="3.40.605.10">
    <property type="entry name" value="Aldehyde Dehydrogenase, Chain A, domain 1"/>
    <property type="match status" value="1"/>
</dbReference>
<dbReference type="Gene3D" id="3.40.309.10">
    <property type="entry name" value="Aldehyde Dehydrogenase, Chain A, domain 2"/>
    <property type="match status" value="1"/>
</dbReference>
<dbReference type="HAMAP" id="MF_00804">
    <property type="entry name" value="BADH"/>
    <property type="match status" value="1"/>
</dbReference>
<dbReference type="InterPro" id="IPR016161">
    <property type="entry name" value="Ald_DH/histidinol_DH"/>
</dbReference>
<dbReference type="InterPro" id="IPR016163">
    <property type="entry name" value="Ald_DH_C"/>
</dbReference>
<dbReference type="InterPro" id="IPR016160">
    <property type="entry name" value="Ald_DH_CS_CYS"/>
</dbReference>
<dbReference type="InterPro" id="IPR029510">
    <property type="entry name" value="Ald_DH_CS_GLU"/>
</dbReference>
<dbReference type="InterPro" id="IPR016162">
    <property type="entry name" value="Ald_DH_N"/>
</dbReference>
<dbReference type="InterPro" id="IPR015590">
    <property type="entry name" value="Aldehyde_DH_dom"/>
</dbReference>
<dbReference type="InterPro" id="IPR011264">
    <property type="entry name" value="BADH"/>
</dbReference>
<dbReference type="NCBIfam" id="TIGR01804">
    <property type="entry name" value="BADH"/>
    <property type="match status" value="1"/>
</dbReference>
<dbReference type="NCBIfam" id="NF009725">
    <property type="entry name" value="PRK13252.1"/>
    <property type="match status" value="1"/>
</dbReference>
<dbReference type="PANTHER" id="PTHR11699">
    <property type="entry name" value="ALDEHYDE DEHYDROGENASE-RELATED"/>
    <property type="match status" value="1"/>
</dbReference>
<dbReference type="Pfam" id="PF00171">
    <property type="entry name" value="Aldedh"/>
    <property type="match status" value="1"/>
</dbReference>
<dbReference type="SUPFAM" id="SSF53720">
    <property type="entry name" value="ALDH-like"/>
    <property type="match status" value="1"/>
</dbReference>
<dbReference type="PROSITE" id="PS00070">
    <property type="entry name" value="ALDEHYDE_DEHYDR_CYS"/>
    <property type="match status" value="1"/>
</dbReference>
<dbReference type="PROSITE" id="PS00687">
    <property type="entry name" value="ALDEHYDE_DEHYDR_GLU"/>
    <property type="match status" value="1"/>
</dbReference>
<accession>P54222</accession>
<keyword id="KW-0479">Metal-binding</keyword>
<keyword id="KW-0520">NAD</keyword>
<keyword id="KW-0521">NADP</keyword>
<keyword id="KW-0558">Oxidation</keyword>
<keyword id="KW-0560">Oxidoreductase</keyword>
<keyword id="KW-0630">Potassium</keyword>
<keyword id="KW-1185">Reference proteome</keyword>
<reference key="1">
    <citation type="journal article" date="1997" name="Microbiology">
        <title>Molecular characterization of the bet genes encoding glycine betaine synthesis in Sinorhizobium meliloti 102F34.</title>
        <authorList>
            <person name="Pocard J.A."/>
            <person name="Vincent N."/>
            <person name="Boncompagni E."/>
            <person name="Tombras Smith L."/>
            <person name="Poggi M.-C."/>
            <person name="Le Rudulier D."/>
        </authorList>
    </citation>
    <scope>NUCLEOTIDE SEQUENCE [GENOMIC DNA]</scope>
    <source>
        <strain>102F34</strain>
    </source>
</reference>
<reference key="2">
    <citation type="journal article" date="2001" name="Proc. Natl. Acad. Sci. U.S.A.">
        <title>Analysis of the chromosome sequence of the legume symbiont Sinorhizobium meliloti strain 1021.</title>
        <authorList>
            <person name="Capela D."/>
            <person name="Barloy-Hubler F."/>
            <person name="Gouzy J."/>
            <person name="Bothe G."/>
            <person name="Ampe F."/>
            <person name="Batut J."/>
            <person name="Boistard P."/>
            <person name="Becker A."/>
            <person name="Boutry M."/>
            <person name="Cadieu E."/>
            <person name="Dreano S."/>
            <person name="Gloux S."/>
            <person name="Godrie T."/>
            <person name="Goffeau A."/>
            <person name="Kahn D."/>
            <person name="Kiss E."/>
            <person name="Lelaure V."/>
            <person name="Masuy D."/>
            <person name="Pohl T."/>
            <person name="Portetelle D."/>
            <person name="Puehler A."/>
            <person name="Purnelle B."/>
            <person name="Ramsperger U."/>
            <person name="Renard C."/>
            <person name="Thebault P."/>
            <person name="Vandenbol M."/>
            <person name="Weidner S."/>
            <person name="Galibert F."/>
        </authorList>
    </citation>
    <scope>NUCLEOTIDE SEQUENCE [LARGE SCALE GENOMIC DNA]</scope>
    <source>
        <strain>1021</strain>
    </source>
</reference>
<reference key="3">
    <citation type="journal article" date="2001" name="Science">
        <title>The composite genome of the legume symbiont Sinorhizobium meliloti.</title>
        <authorList>
            <person name="Galibert F."/>
            <person name="Finan T.M."/>
            <person name="Long S.R."/>
            <person name="Puehler A."/>
            <person name="Abola P."/>
            <person name="Ampe F."/>
            <person name="Barloy-Hubler F."/>
            <person name="Barnett M.J."/>
            <person name="Becker A."/>
            <person name="Boistard P."/>
            <person name="Bothe G."/>
            <person name="Boutry M."/>
            <person name="Bowser L."/>
            <person name="Buhrmester J."/>
            <person name="Cadieu E."/>
            <person name="Capela D."/>
            <person name="Chain P."/>
            <person name="Cowie A."/>
            <person name="Davis R.W."/>
            <person name="Dreano S."/>
            <person name="Federspiel N.A."/>
            <person name="Fisher R.F."/>
            <person name="Gloux S."/>
            <person name="Godrie T."/>
            <person name="Goffeau A."/>
            <person name="Golding B."/>
            <person name="Gouzy J."/>
            <person name="Gurjal M."/>
            <person name="Hernandez-Lucas I."/>
            <person name="Hong A."/>
            <person name="Huizar L."/>
            <person name="Hyman R.W."/>
            <person name="Jones T."/>
            <person name="Kahn D."/>
            <person name="Kahn M.L."/>
            <person name="Kalman S."/>
            <person name="Keating D.H."/>
            <person name="Kiss E."/>
            <person name="Komp C."/>
            <person name="Lelaure V."/>
            <person name="Masuy D."/>
            <person name="Palm C."/>
            <person name="Peck M.C."/>
            <person name="Pohl T.M."/>
            <person name="Portetelle D."/>
            <person name="Purnelle B."/>
            <person name="Ramsperger U."/>
            <person name="Surzycki R."/>
            <person name="Thebault P."/>
            <person name="Vandenbol M."/>
            <person name="Vorhoelter F.J."/>
            <person name="Weidner S."/>
            <person name="Wells D.H."/>
            <person name="Wong K."/>
            <person name="Yeh K.-C."/>
            <person name="Batut J."/>
        </authorList>
    </citation>
    <scope>NUCLEOTIDE SEQUENCE [LARGE SCALE GENOMIC DNA]</scope>
    <source>
        <strain>1021</strain>
    </source>
</reference>
<gene>
    <name evidence="1" type="primary">betB1</name>
    <name type="synonym">betB</name>
    <name type="ordered locus">R00948</name>
    <name type="ORF">SMc00094</name>
</gene>
<protein>
    <recommendedName>
        <fullName evidence="1">Betaine aldehyde dehydrogenase 1</fullName>
        <shortName evidence="1">BADH 1</shortName>
        <ecNumber evidence="1">1.2.1.8</ecNumber>
    </recommendedName>
</protein>
<feature type="chain" id="PRO_0000056553" description="Betaine aldehyde dehydrogenase 1">
    <location>
        <begin position="1"/>
        <end position="487"/>
    </location>
</feature>
<feature type="active site" description="Charge relay system" evidence="1">
    <location>
        <position position="162"/>
    </location>
</feature>
<feature type="active site" description="Proton acceptor" evidence="1">
    <location>
        <position position="250"/>
    </location>
</feature>
<feature type="active site" description="Nucleophile" evidence="1">
    <location>
        <position position="284"/>
    </location>
</feature>
<feature type="active site" description="Charge relay system" evidence="1">
    <location>
        <position position="461"/>
    </location>
</feature>
<feature type="binding site" evidence="1">
    <location>
        <position position="26"/>
    </location>
    <ligand>
        <name>K(+)</name>
        <dbReference type="ChEBI" id="CHEBI:29103"/>
        <label>1</label>
    </ligand>
</feature>
<feature type="binding site" evidence="1">
    <location>
        <position position="27"/>
    </location>
    <ligand>
        <name>K(+)</name>
        <dbReference type="ChEBI" id="CHEBI:29103"/>
        <label>1</label>
    </ligand>
</feature>
<feature type="binding site" evidence="1">
    <location>
        <position position="93"/>
    </location>
    <ligand>
        <name>K(+)</name>
        <dbReference type="ChEBI" id="CHEBI:29103"/>
        <label>1</label>
    </ligand>
</feature>
<feature type="binding site" evidence="1">
    <location>
        <begin position="150"/>
        <end position="152"/>
    </location>
    <ligand>
        <name>NAD(+)</name>
        <dbReference type="ChEBI" id="CHEBI:57540"/>
    </ligand>
</feature>
<feature type="binding site" evidence="1">
    <location>
        <begin position="176"/>
        <end position="179"/>
    </location>
    <ligand>
        <name>NAD(+)</name>
        <dbReference type="ChEBI" id="CHEBI:57540"/>
    </ligand>
</feature>
<feature type="binding site" evidence="1">
    <location>
        <begin position="229"/>
        <end position="232"/>
    </location>
    <ligand>
        <name>NAD(+)</name>
        <dbReference type="ChEBI" id="CHEBI:57540"/>
    </ligand>
</feature>
<feature type="binding site" evidence="1">
    <location>
        <position position="244"/>
    </location>
    <ligand>
        <name>K(+)</name>
        <dbReference type="ChEBI" id="CHEBI:29103"/>
        <label>2</label>
    </ligand>
</feature>
<feature type="binding site" evidence="1">
    <location>
        <position position="252"/>
    </location>
    <ligand>
        <name>NAD(+)</name>
        <dbReference type="ChEBI" id="CHEBI:57540"/>
    </ligand>
</feature>
<feature type="binding site" description="covalent" evidence="1">
    <location>
        <position position="284"/>
    </location>
    <ligand>
        <name>NAD(+)</name>
        <dbReference type="ChEBI" id="CHEBI:57540"/>
    </ligand>
</feature>
<feature type="binding site" evidence="1">
    <location>
        <position position="384"/>
    </location>
    <ligand>
        <name>NAD(+)</name>
        <dbReference type="ChEBI" id="CHEBI:57540"/>
    </ligand>
</feature>
<feature type="binding site" evidence="1">
    <location>
        <position position="454"/>
    </location>
    <ligand>
        <name>K(+)</name>
        <dbReference type="ChEBI" id="CHEBI:29103"/>
        <label>2</label>
    </ligand>
</feature>
<feature type="binding site" evidence="1">
    <location>
        <position position="457"/>
    </location>
    <ligand>
        <name>K(+)</name>
        <dbReference type="ChEBI" id="CHEBI:29103"/>
        <label>2</label>
    </ligand>
</feature>
<feature type="modified residue" description="Cysteine sulfenic acid (-SOH)" evidence="1">
    <location>
        <position position="284"/>
    </location>
</feature>
<feature type="sequence conflict" description="In Ref. 1; AAC13368." evidence="2" ref="1">
    <original>R</original>
    <variation>L</variation>
    <location>
        <position position="82"/>
    </location>
</feature>
<feature type="sequence conflict" description="In Ref. 1; AAC13368." evidence="2" ref="1">
    <original>V</original>
    <variation>D</variation>
    <location>
        <position position="374"/>
    </location>
</feature>
<sequence>MRAQPKASHFIDGEYVEDAAGTVIESIYPATGEIIARLHAATPGIVEKAIAAAKRAQPEWAAMSPTARGRILKRAAELMRQRNRELSELETLDTGKPIQETIVADPTSGADSFEFFGGVAPAALNGDYIPLGGDFAYTKRVPLGVCVGIGAWNYPQQIACWKGAPALVAGNAMVFKPSENTPLGALKIAEILIEAGLPKGLFNVIQGDRATGPLLVNHPDVAKVSLTGSVPTGKKVAGAAAAELKHVTMELGGKSPLIVFDDADLESAIGGAMLGNFYSTGQVCSNGTRVFVQRKIKEPFLARLKERTEAIVIGDPLDEATQLGPMVSAAQRDKVFSYIGKGKAEGARLVTGGGIPNNVSGEGTYIQPTVFADVTDGMTIAREEIFGPVMCVLDFDDEVEVIARANATEFGLSAGVFTADLTRAHRVADRLEAGTLWINTYNLCPVEIPFGGSKQSGFGRENSVAALNHYTELKTVYVGMGPVEAPY</sequence>
<comment type="function">
    <text evidence="1">Involved in the biosynthesis of the osmoprotectant glycine betaine. Catalyzes the irreversible oxidation of betaine aldehyde to the corresponding acid.</text>
</comment>
<comment type="catalytic activity">
    <reaction evidence="1">
        <text>betaine aldehyde + NAD(+) + H2O = glycine betaine + NADH + 2 H(+)</text>
        <dbReference type="Rhea" id="RHEA:15305"/>
        <dbReference type="ChEBI" id="CHEBI:15377"/>
        <dbReference type="ChEBI" id="CHEBI:15378"/>
        <dbReference type="ChEBI" id="CHEBI:15710"/>
        <dbReference type="ChEBI" id="CHEBI:17750"/>
        <dbReference type="ChEBI" id="CHEBI:57540"/>
        <dbReference type="ChEBI" id="CHEBI:57945"/>
        <dbReference type="EC" id="1.2.1.8"/>
    </reaction>
    <physiologicalReaction direction="left-to-right" evidence="1">
        <dbReference type="Rhea" id="RHEA:15306"/>
    </physiologicalReaction>
</comment>
<comment type="cofactor">
    <cofactor evidence="1">
        <name>K(+)</name>
        <dbReference type="ChEBI" id="CHEBI:29103"/>
    </cofactor>
    <text evidence="1">Binds 2 potassium ions per subunit.</text>
</comment>
<comment type="pathway">
    <text evidence="1">Amine and polyamine biosynthesis; betaine biosynthesis via choline pathway; betaine from betaine aldehyde: step 1/1.</text>
</comment>
<comment type="subunit">
    <text evidence="1">Dimer of dimers.</text>
</comment>
<comment type="similarity">
    <text evidence="1">Belongs to the aldehyde dehydrogenase family.</text>
</comment>